<accession>Q9N2A3</accession>
<name>ACM3_GORGO</name>
<comment type="function">
    <text evidence="1">The muscarinic acetylcholine receptor mediates various cellular responses, including inhibition of adenylate cyclase, breakdown of phosphoinositides and modulation of potassium channels through the action of G proteins. Primary transducing effect is Pi turnover (By similarity).</text>
</comment>
<comment type="subunit">
    <text evidence="2 3">Homodimer; the dimers can form tetramers (By similarity). Interacts with NALCN (By similarity). Interacts with TMEM147 (By similarity).</text>
</comment>
<comment type="subcellular location">
    <subcellularLocation>
        <location evidence="2">Cell membrane</location>
        <topology evidence="4">Multi-pass membrane protein</topology>
    </subcellularLocation>
    <subcellularLocation>
        <location evidence="1">Postsynaptic cell membrane</location>
        <topology evidence="4">Multi-pass membrane protein</topology>
    </subcellularLocation>
    <subcellularLocation>
        <location evidence="2">Basolateral cell membrane</location>
        <topology evidence="4">Multi-pass membrane protein</topology>
    </subcellularLocation>
    <subcellularLocation>
        <location evidence="2">Endoplasmic reticulum membrane</location>
        <topology evidence="4">Multi-pass membrane protein</topology>
    </subcellularLocation>
    <text evidence="2">Colocalizes with TMEM147 in the endoplasmic reticulum (ER) membrane. TMEM147 impairs its trafficking to the cell membrane leading to its retention in the ER membrane.</text>
</comment>
<comment type="similarity">
    <text evidence="5">Belongs to the G-protein coupled receptor 1 family. Muscarinic acetylcholine receptor subfamily. CHRM3 sub-subfamily.</text>
</comment>
<dbReference type="EMBL" id="AB041397">
    <property type="protein sequence ID" value="BAA94482.1"/>
    <property type="molecule type" value="Genomic_DNA"/>
</dbReference>
<dbReference type="RefSeq" id="XP_018887642.1">
    <property type="nucleotide sequence ID" value="XM_019032097.4"/>
</dbReference>
<dbReference type="RefSeq" id="XP_018887649.1">
    <property type="nucleotide sequence ID" value="XM_019032104.1"/>
</dbReference>
<dbReference type="RefSeq" id="XP_018887651.1">
    <property type="nucleotide sequence ID" value="XM_019032106.4"/>
</dbReference>
<dbReference type="RefSeq" id="XP_018887653.1">
    <property type="nucleotide sequence ID" value="XM_019032108.4"/>
</dbReference>
<dbReference type="RefSeq" id="XP_055235834.1">
    <property type="nucleotide sequence ID" value="XM_055379859.2"/>
</dbReference>
<dbReference type="RefSeq" id="XP_055235841.1">
    <property type="nucleotide sequence ID" value="XM_055379866.2"/>
</dbReference>
<dbReference type="RefSeq" id="XP_055235859.1">
    <property type="nucleotide sequence ID" value="XM_055379884.2"/>
</dbReference>
<dbReference type="RefSeq" id="XP_055235861.1">
    <property type="nucleotide sequence ID" value="XM_055379886.2"/>
</dbReference>
<dbReference type="RefSeq" id="XP_055235862.1">
    <property type="nucleotide sequence ID" value="XM_055379887.2"/>
</dbReference>
<dbReference type="RefSeq" id="XP_055235871.1">
    <property type="nucleotide sequence ID" value="XM_055379896.2"/>
</dbReference>
<dbReference type="RefSeq" id="XP_055235890.1">
    <property type="nucleotide sequence ID" value="XM_055379915.2"/>
</dbReference>
<dbReference type="RefSeq" id="XP_063564117.1">
    <property type="nucleotide sequence ID" value="XM_063708047.1"/>
</dbReference>
<dbReference type="SMR" id="Q9N2A3"/>
<dbReference type="FunCoup" id="Q9N2A3">
    <property type="interactions" value="1168"/>
</dbReference>
<dbReference type="GlyCosmos" id="Q9N2A3">
    <property type="glycosylation" value="5 sites, No reported glycans"/>
</dbReference>
<dbReference type="GeneID" id="101123925"/>
<dbReference type="KEGG" id="ggo:101123925"/>
<dbReference type="CTD" id="1131"/>
<dbReference type="eggNOG" id="KOG4220">
    <property type="taxonomic scope" value="Eukaryota"/>
</dbReference>
<dbReference type="HOGENOM" id="CLU_009579_11_2_1"/>
<dbReference type="InParanoid" id="Q9N2A3"/>
<dbReference type="OrthoDB" id="6116at9604"/>
<dbReference type="Proteomes" id="UP000001519">
    <property type="component" value="Unplaced"/>
</dbReference>
<dbReference type="GO" id="GO:0016323">
    <property type="term" value="C:basolateral plasma membrane"/>
    <property type="evidence" value="ECO:0007669"/>
    <property type="project" value="UniProtKB-SubCell"/>
</dbReference>
<dbReference type="GO" id="GO:0005789">
    <property type="term" value="C:endoplasmic reticulum membrane"/>
    <property type="evidence" value="ECO:0007669"/>
    <property type="project" value="UniProtKB-SubCell"/>
</dbReference>
<dbReference type="GO" id="GO:0005886">
    <property type="term" value="C:plasma membrane"/>
    <property type="evidence" value="ECO:0000250"/>
    <property type="project" value="UniProtKB"/>
</dbReference>
<dbReference type="GO" id="GO:0045211">
    <property type="term" value="C:postsynaptic membrane"/>
    <property type="evidence" value="ECO:0007669"/>
    <property type="project" value="UniProtKB-SubCell"/>
</dbReference>
<dbReference type="GO" id="GO:0042166">
    <property type="term" value="F:acetylcholine binding"/>
    <property type="evidence" value="ECO:0000250"/>
    <property type="project" value="UniProtKB"/>
</dbReference>
<dbReference type="GO" id="GO:0016907">
    <property type="term" value="F:G protein-coupled acetylcholine receptor activity"/>
    <property type="evidence" value="ECO:0000250"/>
    <property type="project" value="UniProtKB"/>
</dbReference>
<dbReference type="GO" id="GO:0004930">
    <property type="term" value="F:G protein-coupled receptor activity"/>
    <property type="evidence" value="ECO:0000318"/>
    <property type="project" value="GO_Central"/>
</dbReference>
<dbReference type="GO" id="GO:0071880">
    <property type="term" value="P:adenylate cyclase-activating adrenergic receptor signaling pathway"/>
    <property type="evidence" value="ECO:0000318"/>
    <property type="project" value="GO_Central"/>
</dbReference>
<dbReference type="GO" id="GO:0007213">
    <property type="term" value="P:G protein-coupled acetylcholine receptor signaling pathway"/>
    <property type="evidence" value="ECO:0000250"/>
    <property type="project" value="UniProtKB"/>
</dbReference>
<dbReference type="GO" id="GO:0043410">
    <property type="term" value="P:positive regulation of MAPK cascade"/>
    <property type="evidence" value="ECO:0000318"/>
    <property type="project" value="GO_Central"/>
</dbReference>
<dbReference type="GO" id="GO:0045987">
    <property type="term" value="P:positive regulation of smooth muscle contraction"/>
    <property type="evidence" value="ECO:0007669"/>
    <property type="project" value="InterPro"/>
</dbReference>
<dbReference type="GO" id="GO:0046541">
    <property type="term" value="P:saliva secretion"/>
    <property type="evidence" value="ECO:0007669"/>
    <property type="project" value="InterPro"/>
</dbReference>
<dbReference type="CDD" id="cd15299">
    <property type="entry name" value="7tmA_mAChR_M3"/>
    <property type="match status" value="1"/>
</dbReference>
<dbReference type="FunFam" id="1.20.1070.10:FF:000047">
    <property type="entry name" value="Muscarinic acetylcholine receptor"/>
    <property type="match status" value="1"/>
</dbReference>
<dbReference type="FunFam" id="1.20.1070.10:FF:000103">
    <property type="entry name" value="Muscarinic acetylcholine receptor"/>
    <property type="match status" value="1"/>
</dbReference>
<dbReference type="Gene3D" id="1.20.1070.10">
    <property type="entry name" value="Rhodopsin 7-helix transmembrane proteins"/>
    <property type="match status" value="2"/>
</dbReference>
<dbReference type="InterPro" id="IPR000276">
    <property type="entry name" value="GPCR_Rhodpsn"/>
</dbReference>
<dbReference type="InterPro" id="IPR017452">
    <property type="entry name" value="GPCR_Rhodpsn_7TM"/>
</dbReference>
<dbReference type="InterPro" id="IPR001183">
    <property type="entry name" value="Musac_Ach_M3_rcpt"/>
</dbReference>
<dbReference type="InterPro" id="IPR000995">
    <property type="entry name" value="Musac_Ach_rcpt"/>
</dbReference>
<dbReference type="PANTHER" id="PTHR24247">
    <property type="entry name" value="5-HYDROXYTRYPTAMINE RECEPTOR"/>
    <property type="match status" value="1"/>
</dbReference>
<dbReference type="PANTHER" id="PTHR24247:SF183">
    <property type="entry name" value="MUSCARINIC ACETYLCHOLINE RECEPTOR M3"/>
    <property type="match status" value="1"/>
</dbReference>
<dbReference type="Pfam" id="PF00001">
    <property type="entry name" value="7tm_1"/>
    <property type="match status" value="1"/>
</dbReference>
<dbReference type="PRINTS" id="PR00237">
    <property type="entry name" value="GPCRRHODOPSN"/>
</dbReference>
<dbReference type="PRINTS" id="PR00243">
    <property type="entry name" value="MUSCARINICR"/>
</dbReference>
<dbReference type="PRINTS" id="PR00540">
    <property type="entry name" value="MUSCRINICM3R"/>
</dbReference>
<dbReference type="SMART" id="SM01381">
    <property type="entry name" value="7TM_GPCR_Srsx"/>
    <property type="match status" value="1"/>
</dbReference>
<dbReference type="SUPFAM" id="SSF81321">
    <property type="entry name" value="Family A G protein-coupled receptor-like"/>
    <property type="match status" value="1"/>
</dbReference>
<dbReference type="PROSITE" id="PS00237">
    <property type="entry name" value="G_PROTEIN_RECEP_F1_1"/>
    <property type="match status" value="1"/>
</dbReference>
<dbReference type="PROSITE" id="PS50262">
    <property type="entry name" value="G_PROTEIN_RECEP_F1_2"/>
    <property type="match status" value="1"/>
</dbReference>
<sequence>MTLHNNSTTSPLFPNISSSWIHSPSDAGLPPGTDTHFGSYNVSRAAGNFSSPDGTTDDPLGGHTVWQVVFIAFLTGILALVTIIGNILVIVSFKVNKQLKTVNNYFLLSLACADLIIGVISMNLFTTYIIMNRWALGNLACDLWLAIDYVASNASVMNLLVISFDRYFSITRPLTYRAKRTTKRAGVMIGLAWVISFVLWAPAILFWQYFVGKRTVPPGECFIQFLSEPTITFGTAIAAFYMPVTIMTILYWRIYKETEKRTKELAGLQASGTEAETENFVHPTGSSRSCSSYELQQQSMKRSNRRKYGRCHFWFTTKSWKPSSEQMDQDHSSSDSWNNNDAAASLENSASSDEEDIGSETRAIYSIVLKLPGHSTILNSTKLPSSDNLQVPEEELGMVDLERKADKLQAQKSVDDGGSFPKSFSKLPIQLESAVDTAKTSDVNSSVGKSTATLPLSFKEATLAKRFALKTRSQITKRKRMSLVKEKKAAQTLSAILLAFIITWTPYNIMVLVNTFCDSCIPKTFWNLGYWLCYINSTVNPVCYALCNKTFRTTFKMLLLCQCGKKKRRKQQYQQRQSVIFHKRAPEQAL</sequence>
<proteinExistence type="inferred from homology"/>
<reference key="1">
    <citation type="journal article" date="2004" name="Mol. Biol. Evol.">
        <title>Human-specific amino acid changes found in 103 protein-coding genes.</title>
        <authorList>
            <person name="Kitano T."/>
            <person name="Liu Y.-H."/>
            <person name="Ueda S."/>
            <person name="Saitou N."/>
        </authorList>
    </citation>
    <scope>NUCLEOTIDE SEQUENCE [GENOMIC DNA]</scope>
</reference>
<organism>
    <name type="scientific">Gorilla gorilla gorilla</name>
    <name type="common">Western lowland gorilla</name>
    <dbReference type="NCBI Taxonomy" id="9595"/>
    <lineage>
        <taxon>Eukaryota</taxon>
        <taxon>Metazoa</taxon>
        <taxon>Chordata</taxon>
        <taxon>Craniata</taxon>
        <taxon>Vertebrata</taxon>
        <taxon>Euteleostomi</taxon>
        <taxon>Mammalia</taxon>
        <taxon>Eutheria</taxon>
        <taxon>Euarchontoglires</taxon>
        <taxon>Primates</taxon>
        <taxon>Haplorrhini</taxon>
        <taxon>Catarrhini</taxon>
        <taxon>Hominidae</taxon>
        <taxon>Gorilla</taxon>
    </lineage>
</organism>
<evidence type="ECO:0000250" key="1"/>
<evidence type="ECO:0000250" key="2">
    <source>
        <dbReference type="UniProtKB" id="P20309"/>
    </source>
</evidence>
<evidence type="ECO:0000250" key="3">
    <source>
        <dbReference type="UniProtKB" id="Q9ERZ3"/>
    </source>
</evidence>
<evidence type="ECO:0000255" key="4"/>
<evidence type="ECO:0000255" key="5">
    <source>
        <dbReference type="PROSITE-ProRule" id="PRU00521"/>
    </source>
</evidence>
<evidence type="ECO:0000256" key="6">
    <source>
        <dbReference type="SAM" id="MobiDB-lite"/>
    </source>
</evidence>
<gene>
    <name type="primary">CHRM3</name>
</gene>
<protein>
    <recommendedName>
        <fullName>Muscarinic acetylcholine receptor M3</fullName>
    </recommendedName>
</protein>
<keyword id="KW-1003">Cell membrane</keyword>
<keyword id="KW-1015">Disulfide bond</keyword>
<keyword id="KW-0256">Endoplasmic reticulum</keyword>
<keyword id="KW-0297">G-protein coupled receptor</keyword>
<keyword id="KW-0325">Glycoprotein</keyword>
<keyword id="KW-0472">Membrane</keyword>
<keyword id="KW-0597">Phosphoprotein</keyword>
<keyword id="KW-0628">Postsynaptic cell membrane</keyword>
<keyword id="KW-0675">Receptor</keyword>
<keyword id="KW-1185">Reference proteome</keyword>
<keyword id="KW-0770">Synapse</keyword>
<keyword id="KW-0807">Transducer</keyword>
<keyword id="KW-0812">Transmembrane</keyword>
<keyword id="KW-1133">Transmembrane helix</keyword>
<feature type="chain" id="PRO_0000069028" description="Muscarinic acetylcholine receptor M3">
    <location>
        <begin position="1"/>
        <end position="590"/>
    </location>
</feature>
<feature type="topological domain" description="Extracellular" evidence="1">
    <location>
        <begin position="1"/>
        <end position="67"/>
    </location>
</feature>
<feature type="transmembrane region" description="Helical; Name=1" evidence="1">
    <location>
        <begin position="68"/>
        <end position="91"/>
    </location>
</feature>
<feature type="topological domain" description="Cytoplasmic" evidence="1">
    <location>
        <begin position="92"/>
        <end position="104"/>
    </location>
</feature>
<feature type="transmembrane region" description="Helical; Name=2" evidence="1">
    <location>
        <begin position="105"/>
        <end position="130"/>
    </location>
</feature>
<feature type="topological domain" description="Extracellular" evidence="1">
    <location>
        <begin position="131"/>
        <end position="142"/>
    </location>
</feature>
<feature type="transmembrane region" description="Helical; Name=3" evidence="1">
    <location>
        <begin position="143"/>
        <end position="164"/>
    </location>
</feature>
<feature type="topological domain" description="Cytoplasmic" evidence="1">
    <location>
        <begin position="165"/>
        <end position="184"/>
    </location>
</feature>
<feature type="transmembrane region" description="Helical; Name=4" evidence="1">
    <location>
        <begin position="185"/>
        <end position="206"/>
    </location>
</feature>
<feature type="topological domain" description="Extracellular" evidence="1">
    <location>
        <begin position="207"/>
        <end position="229"/>
    </location>
</feature>
<feature type="transmembrane region" description="Helical; Name=5" evidence="1">
    <location>
        <begin position="230"/>
        <end position="252"/>
    </location>
</feature>
<feature type="topological domain" description="Cytoplasmic" evidence="1">
    <location>
        <begin position="253"/>
        <end position="491"/>
    </location>
</feature>
<feature type="transmembrane region" description="Helical; Name=6" evidence="1">
    <location>
        <begin position="492"/>
        <end position="514"/>
    </location>
</feature>
<feature type="topological domain" description="Extracellular" evidence="1">
    <location>
        <begin position="515"/>
        <end position="526"/>
    </location>
</feature>
<feature type="transmembrane region" description="Helical; Name=7" evidence="1">
    <location>
        <begin position="527"/>
        <end position="546"/>
    </location>
</feature>
<feature type="topological domain" description="Cytoplasmic" evidence="1">
    <location>
        <begin position="547"/>
        <end position="590"/>
    </location>
</feature>
<feature type="region of interest" description="Disordered" evidence="6">
    <location>
        <begin position="323"/>
        <end position="357"/>
    </location>
</feature>
<feature type="short sequence motif" description="Basolateral sorting signal" evidence="1">
    <location>
        <begin position="275"/>
        <end position="281"/>
    </location>
</feature>
<feature type="compositionally biased region" description="Low complexity" evidence="6">
    <location>
        <begin position="334"/>
        <end position="345"/>
    </location>
</feature>
<feature type="modified residue" description="Phosphoserine" evidence="3">
    <location>
        <position position="385"/>
    </location>
</feature>
<feature type="glycosylation site" description="N-linked (GlcNAc...) asparagine" evidence="4">
    <location>
        <position position="5"/>
    </location>
</feature>
<feature type="glycosylation site" description="N-linked (GlcNAc...) asparagine" evidence="4">
    <location>
        <position position="6"/>
    </location>
</feature>
<feature type="glycosylation site" description="N-linked (GlcNAc...) asparagine" evidence="4">
    <location>
        <position position="15"/>
    </location>
</feature>
<feature type="glycosylation site" description="N-linked (GlcNAc...) asparagine" evidence="4">
    <location>
        <position position="41"/>
    </location>
</feature>
<feature type="glycosylation site" description="N-linked (GlcNAc...) asparagine" evidence="4">
    <location>
        <position position="48"/>
    </location>
</feature>
<feature type="disulfide bond" evidence="5">
    <location>
        <begin position="141"/>
        <end position="221"/>
    </location>
</feature>
<feature type="disulfide bond" evidence="5">
    <location>
        <begin position="517"/>
        <end position="520"/>
    </location>
</feature>